<sequence length="1961" mass="214062">MSEEPKEKPAKPAHRKRKGKKSDANASYLRAARAGHLEKALDYIKNGVDVNICNQNGLNALHLASKEGHVEVVSELLQREANVDAATKKGNTALHIASLAGQAEVVKVLVTNGANVNAQSQNGFTPLYMAAQENHLEVVRFLLDNGASQSLATEDGFTPLAVALQQGHDQVVSLLLENDTKGKVRLPALHIAARKDDTKAAALLLQNDTNADVESKSGFTPLHIAAHYGNINVATLLLNRAAAVDFTARNDITPLHVASKRGNANMVKLLLDRGAKIDAKTRDGLTPLHCGARSGHEQVVEMLLDRSAPILSKTKNGLSPLHMATQGDHLNCVQLLLQHNVPVDDVTNDYLTALHVAAHCGHYKVAKVLLDKKASPNAKALNGFTPLHIACKKNRIRVMELLLKHGASIQAVTESGLTPIHVAAFMGHVNIVSQLMHHGASPNTTNVRGETALHMAARSGQAEVVRYLVQDGAQVEAKAKDDQTPLHISARLGKADIVQQLLQQGASPNAATTSGYTPLHLAAREGHEDVAAFLLDHGASLSITTKKGFTPLHVAAKYGKLEVASLLLQKSASPDAAGKSGLTPLHVAAHYDNQKVALLLLDQGASPHAAAKNGYTPLHIAAKKNQMDIATSLLEYGADANAVTRQGIASVHLAAQEGHVDMVSLLLSRNANVNLSNKSGLTPLHLAAQEDRVNVAEVLVNQGAHVDAQTKMGYTPLHVGCHYGNIKIVNFLLQHSAKVNAKTKNGYTALHQAAQQGHTHIINVLLQNNASPNELTVNGNTALAIARRLGYISVVDTLKVVTEEIMTTTTITEKHKMNVPETMNEVLDMSDDEVRKASAPEKLSDGEYISDGEEGDKCTWFKIPKVQEVLVKSEDAITGDTDKYLGPQDLKELGDDSLPAEGYVGFSLGARSASLRSFSSDRSYTLNRSSYARDSMMIEELLVPSKEQHLTFTREFDSDSLRHYSWAADTLDNVNLVSSPVHSGFLVSFMVDARGGSMRGSRHHGMRIIIPPRKCTAPTRITCRLVKRHKLANPPPMVEGEGLASRLVEMGPAGAQFLGPVIVEIPHFGSMRGKERELIVLRSENGETWKEHQFDSKNEDLAELLNGMDEELDSPEELGTKRICRIITKDFPQYFAVVSRIKQESNQIGPEGGILSSTTVPLVQASFPEGALTKRIRVGLQAQPVPEETVKKILGNKATFSPIVTVEPRRRKFHKPITMTIPVPPPSGEGVSNGYKGDATPNLRLLCSITGGTSPAQWEDITGTTPLTFIKDCVSFTTNVSARFWLADCHQVLETVGLASQLYRELICVPYMAKFVVFAKTNDPVESSLRCFCMTDDRVDKTLEQQENFEEVARSKDIEVLEGKPIYVDCYGNLAPLTKGGQQLVFNFYSFKENRLPFSIKIRDTSQEPCGRLSFLKEPKTTKGLPQTAVCNLNITLPAHKKAEKADRRQSFASLALRKRYSYLTEPSMSPQSPCERTDIRMAIVADHLGLSWTELARELNFSVDEINQIRVENPNSLISQSFMLLKKWVTRDGKNATTDALTSVLTKINRIDIVTLLEGPIFDYGNISGTRSFADENNVFHDPVDGHPSFQVELETPMGLYCTPPNPFQQDDHFSDISSIESPFRTPSRLSDGLVPSQGNIEHPTGGPPVVTAEDTSLEDSKMDDSVTVTDPADPLDVDESQLKDLCQSECAQCWASVPGIPNDGRQAEPLRPQTRKVGMSSEQQEKGKSGPDEEVTEDKVKSLFEDIQLEEVEAEEMTEDQGQAMLNRVQRAELAMSSLAGWQNETPSGSLESPAQARRLTGGLLDRLDDSSDQARDSITSYLTGEPGKIEANGNHTAEVIPEAKAKPYFPESQNDIGKQSIKENLKPKTHGCGRTEEPVSPLTAYQKSLEETSKLVIEDAPKPCVPVGMKKMTRTTADGKARLNLQEEEGSTRSEPKQGEGYKVKTKKEIRNVEKKTH</sequence>
<proteinExistence type="evidence at protein level"/>
<keyword id="KW-0025">Alternative splicing</keyword>
<keyword id="KW-0040">ANK repeat</keyword>
<keyword id="KW-1003">Cell membrane</keyword>
<keyword id="KW-0966">Cell projection</keyword>
<keyword id="KW-0963">Cytoplasm</keyword>
<keyword id="KW-0206">Cytoskeleton</keyword>
<keyword id="KW-0458">Lysosome</keyword>
<keyword id="KW-0472">Membrane</keyword>
<keyword id="KW-0597">Phosphoprotein</keyword>
<keyword id="KW-0628">Postsynaptic cell membrane</keyword>
<keyword id="KW-1185">Reference proteome</keyword>
<keyword id="KW-0677">Repeat</keyword>
<keyword id="KW-0770">Synapse</keyword>
<dbReference type="EMBL" id="L40631">
    <property type="protein sequence ID" value="AAB01602.1"/>
    <property type="molecule type" value="mRNA"/>
</dbReference>
<dbReference type="EMBL" id="L40631">
    <property type="protein sequence ID" value="AAB01603.1"/>
    <property type="molecule type" value="mRNA"/>
</dbReference>
<dbReference type="EMBL" id="L40632">
    <property type="protein sequence ID" value="AAB01607.1"/>
    <property type="molecule type" value="mRNA"/>
</dbReference>
<dbReference type="EMBL" id="AK035681">
    <property type="protein sequence ID" value="BAC29151.1"/>
    <property type="molecule type" value="mRNA"/>
</dbReference>
<dbReference type="EMBL" id="AK162007">
    <property type="protein sequence ID" value="BAE36677.1"/>
    <property type="molecule type" value="mRNA"/>
</dbReference>
<dbReference type="EMBL" id="AC100427">
    <property type="status" value="NOT_ANNOTATED_CDS"/>
    <property type="molecule type" value="Genomic_DNA"/>
</dbReference>
<dbReference type="EMBL" id="AC129018">
    <property type="status" value="NOT_ANNOTATED_CDS"/>
    <property type="molecule type" value="Genomic_DNA"/>
</dbReference>
<dbReference type="EMBL" id="AC132435">
    <property type="status" value="NOT_ANNOTATED_CDS"/>
    <property type="molecule type" value="Genomic_DNA"/>
</dbReference>
<dbReference type="EMBL" id="AC156836">
    <property type="status" value="NOT_ANNOTATED_CDS"/>
    <property type="molecule type" value="Genomic_DNA"/>
</dbReference>
<dbReference type="EMBL" id="CH466553">
    <property type="protein sequence ID" value="EDL31985.1"/>
    <property type="molecule type" value="Genomic_DNA"/>
</dbReference>
<dbReference type="EMBL" id="CH466553">
    <property type="protein sequence ID" value="EDL31989.1"/>
    <property type="molecule type" value="Genomic_DNA"/>
</dbReference>
<dbReference type="EMBL" id="CH466553">
    <property type="protein sequence ID" value="EDL31990.1"/>
    <property type="molecule type" value="Genomic_DNA"/>
</dbReference>
<dbReference type="EMBL" id="BC021657">
    <property type="protein sequence ID" value="AAH21657.1"/>
    <property type="molecule type" value="mRNA"/>
</dbReference>
<dbReference type="EMBL" id="U89274">
    <property type="protein sequence ID" value="AAB58380.1"/>
    <property type="status" value="ALT_INIT"/>
    <property type="molecule type" value="mRNA"/>
</dbReference>
<dbReference type="EMBL" id="U89275">
    <property type="protein sequence ID" value="AAB58381.1"/>
    <property type="status" value="ALT_INIT"/>
    <property type="molecule type" value="mRNA"/>
</dbReference>
<dbReference type="CCDS" id="CCDS23909.1">
    <molecule id="G5E8K5-1"/>
</dbReference>
<dbReference type="CCDS" id="CCDS23912.1">
    <molecule id="G5E8K5-4"/>
</dbReference>
<dbReference type="CCDS" id="CCDS35931.1">
    <molecule id="G5E8K5-3"/>
</dbReference>
<dbReference type="CCDS" id="CCDS59545.1">
    <molecule id="G5E8K5-2"/>
</dbReference>
<dbReference type="CCDS" id="CCDS59546.1">
    <molecule id="G5E8K5-6"/>
</dbReference>
<dbReference type="RefSeq" id="NP_033800.2">
    <molecule id="G5E8K5-6"/>
    <property type="nucleotide sequence ID" value="NM_009670.4"/>
</dbReference>
<dbReference type="RefSeq" id="NP_666117.2">
    <molecule id="G5E8K5-1"/>
    <property type="nucleotide sequence ID" value="NM_146005.3"/>
</dbReference>
<dbReference type="RefSeq" id="NP_733788.2">
    <molecule id="G5E8K5-4"/>
    <property type="nucleotide sequence ID" value="NM_170687.3"/>
</dbReference>
<dbReference type="RefSeq" id="NP_733789.1">
    <property type="nucleotide sequence ID" value="NM_170688.2"/>
</dbReference>
<dbReference type="RefSeq" id="NP_733790.2">
    <property type="nucleotide sequence ID" value="NM_170689.2"/>
</dbReference>
<dbReference type="RefSeq" id="NP_733791.2">
    <property type="nucleotide sequence ID" value="NM_170690.2"/>
</dbReference>
<dbReference type="RefSeq" id="NP_733924.2">
    <molecule id="G5E8K5-2"/>
    <property type="nucleotide sequence ID" value="NM_170728.2"/>
</dbReference>
<dbReference type="RefSeq" id="NP_733925.2">
    <molecule id="G5E8K5-3"/>
    <property type="nucleotide sequence ID" value="NM_170729.2"/>
</dbReference>
<dbReference type="RefSeq" id="NP_733926.2">
    <property type="nucleotide sequence ID" value="NM_170730.2"/>
</dbReference>
<dbReference type="RefSeq" id="XP_006513202.1">
    <molecule id="G5E8K5-5"/>
    <property type="nucleotide sequence ID" value="XM_006513139.5"/>
</dbReference>
<dbReference type="SMR" id="G5E8K5"/>
<dbReference type="BioGRID" id="198102">
    <property type="interactions" value="24"/>
</dbReference>
<dbReference type="FunCoup" id="G5E8K5">
    <property type="interactions" value="160"/>
</dbReference>
<dbReference type="IntAct" id="G5E8K5">
    <property type="interactions" value="9"/>
</dbReference>
<dbReference type="MINT" id="G5E8K5"/>
<dbReference type="STRING" id="10090.ENSMUSP00000138326"/>
<dbReference type="GlyGen" id="G5E8K5">
    <property type="glycosylation" value="4 sites, 2 N-linked glycans (2 sites), 1 O-linked glycan (2 sites)"/>
</dbReference>
<dbReference type="iPTMnet" id="G5E8K5"/>
<dbReference type="PhosphoSitePlus" id="G5E8K5"/>
<dbReference type="SwissPalm" id="G5E8K5"/>
<dbReference type="jPOST" id="G5E8K5"/>
<dbReference type="PaxDb" id="10090-ENSMUSP00000090089"/>
<dbReference type="ProteomicsDB" id="296240">
    <molecule id="G5E8K5-1"/>
</dbReference>
<dbReference type="ProteomicsDB" id="296241">
    <molecule id="G5E8K5-2"/>
</dbReference>
<dbReference type="ProteomicsDB" id="296242">
    <molecule id="G5E8K5-3"/>
</dbReference>
<dbReference type="ProteomicsDB" id="296243">
    <molecule id="G5E8K5-4"/>
</dbReference>
<dbReference type="ProteomicsDB" id="296244">
    <molecule id="G5E8K5-5"/>
</dbReference>
<dbReference type="ProteomicsDB" id="296245">
    <molecule id="G5E8K5-6"/>
</dbReference>
<dbReference type="Pumba" id="G5E8K5"/>
<dbReference type="ABCD" id="G5E8K5">
    <property type="antibodies" value="6 sequenced antibodies"/>
</dbReference>
<dbReference type="Antibodypedia" id="4197">
    <property type="antibodies" value="293 antibodies from 29 providers"/>
</dbReference>
<dbReference type="DNASU" id="11735"/>
<dbReference type="Ensembl" id="ENSMUST00000054167.15">
    <molecule id="G5E8K5-3"/>
    <property type="protein sequence ID" value="ENSMUSP00000061698.9"/>
    <property type="gene ID" value="ENSMUSG00000069601.15"/>
</dbReference>
<dbReference type="Ensembl" id="ENSMUST00000092433.12">
    <molecule id="G5E8K5-4"/>
    <property type="protein sequence ID" value="ENSMUSP00000090089.5"/>
    <property type="gene ID" value="ENSMUSG00000069601.15"/>
</dbReference>
<dbReference type="Ensembl" id="ENSMUST00000092434.12">
    <molecule id="G5E8K5-1"/>
    <property type="protein sequence ID" value="ENSMUSP00000090090.6"/>
    <property type="gene ID" value="ENSMUSG00000069601.15"/>
</dbReference>
<dbReference type="Ensembl" id="ENSMUST00000181974.8">
    <molecule id="G5E8K5-6"/>
    <property type="protein sequence ID" value="ENSMUSP00000138285.2"/>
    <property type="gene ID" value="ENSMUSG00000069601.15"/>
</dbReference>
<dbReference type="Ensembl" id="ENSMUST00000182029.8">
    <molecule id="G5E8K5-5"/>
    <property type="protein sequence ID" value="ENSMUSP00000138337.2"/>
    <property type="gene ID" value="ENSMUSG00000069601.15"/>
</dbReference>
<dbReference type="Ensembl" id="ENSMUST00000182155.8">
    <molecule id="G5E8K5-2"/>
    <property type="protein sequence ID" value="ENSMUSP00000138347.2"/>
    <property type="gene ID" value="ENSMUSG00000069601.15"/>
</dbReference>
<dbReference type="Ensembl" id="ENSMUST00000182884.8">
    <molecule id="G5E8K5-1"/>
    <property type="protein sequence ID" value="ENSMUSP00000138326.2"/>
    <property type="gene ID" value="ENSMUSG00000069601.15"/>
</dbReference>
<dbReference type="GeneID" id="11735"/>
<dbReference type="KEGG" id="mmu:11735"/>
<dbReference type="UCSC" id="uc007fmw.1">
    <molecule id="G5E8K5-1"/>
    <property type="organism name" value="mouse"/>
</dbReference>
<dbReference type="UCSC" id="uc007fna.1">
    <molecule id="G5E8K5-2"/>
    <property type="organism name" value="mouse"/>
</dbReference>
<dbReference type="UCSC" id="uc007fnb.1">
    <molecule id="G5E8K5-3"/>
    <property type="organism name" value="mouse"/>
</dbReference>
<dbReference type="UCSC" id="uc007fnh.1">
    <molecule id="G5E8K5-6"/>
    <property type="organism name" value="mouse"/>
</dbReference>
<dbReference type="UCSC" id="uc007fni.1">
    <molecule id="G5E8K5-5"/>
    <property type="organism name" value="mouse"/>
</dbReference>
<dbReference type="UCSC" id="uc007fnk.1">
    <molecule id="G5E8K5-4"/>
    <property type="organism name" value="mouse"/>
</dbReference>
<dbReference type="AGR" id="MGI:88026"/>
<dbReference type="CTD" id="288"/>
<dbReference type="MGI" id="MGI:88026">
    <property type="gene designation" value="Ank3"/>
</dbReference>
<dbReference type="VEuPathDB" id="HostDB:ENSMUSG00000069601"/>
<dbReference type="eggNOG" id="KOG4177">
    <property type="taxonomic scope" value="Eukaryota"/>
</dbReference>
<dbReference type="GeneTree" id="ENSGT00940000154939"/>
<dbReference type="HOGENOM" id="CLU_000134_7_2_1"/>
<dbReference type="InParanoid" id="G5E8K5"/>
<dbReference type="OrthoDB" id="366390at2759"/>
<dbReference type="TreeFam" id="TF351263"/>
<dbReference type="BioGRID-ORCS" id="11735">
    <property type="hits" value="3 hits in 79 CRISPR screens"/>
</dbReference>
<dbReference type="ChiTaRS" id="Ank3">
    <property type="organism name" value="mouse"/>
</dbReference>
<dbReference type="PRO" id="PR:G5E8K5"/>
<dbReference type="Proteomes" id="UP000000589">
    <property type="component" value="Chromosome 10"/>
</dbReference>
<dbReference type="RNAct" id="G5E8K5">
    <property type="molecule type" value="protein"/>
</dbReference>
<dbReference type="Bgee" id="ENSMUSG00000069601">
    <property type="expression patterns" value="Expressed in lateral geniculate body and 255 other cell types or tissues"/>
</dbReference>
<dbReference type="ExpressionAtlas" id="G5E8K5">
    <property type="expression patterns" value="baseline and differential"/>
</dbReference>
<dbReference type="GO" id="GO:0030424">
    <property type="term" value="C:axon"/>
    <property type="evidence" value="ECO:0000314"/>
    <property type="project" value="MGI"/>
</dbReference>
<dbReference type="GO" id="GO:0043194">
    <property type="term" value="C:axon initial segment"/>
    <property type="evidence" value="ECO:0000314"/>
    <property type="project" value="BHF-UCL"/>
</dbReference>
<dbReference type="GO" id="GO:0009986">
    <property type="term" value="C:cell surface"/>
    <property type="evidence" value="ECO:0000250"/>
    <property type="project" value="BHF-UCL"/>
</dbReference>
<dbReference type="GO" id="GO:0030425">
    <property type="term" value="C:dendrite"/>
    <property type="evidence" value="ECO:0000250"/>
    <property type="project" value="BHF-UCL"/>
</dbReference>
<dbReference type="GO" id="GO:0014704">
    <property type="term" value="C:intercalated disc"/>
    <property type="evidence" value="ECO:0000314"/>
    <property type="project" value="MGI"/>
</dbReference>
<dbReference type="GO" id="GO:0005764">
    <property type="term" value="C:lysosome"/>
    <property type="evidence" value="ECO:0007669"/>
    <property type="project" value="UniProtKB-SubCell"/>
</dbReference>
<dbReference type="GO" id="GO:0016020">
    <property type="term" value="C:membrane"/>
    <property type="evidence" value="ECO:0000314"/>
    <property type="project" value="MGI"/>
</dbReference>
<dbReference type="GO" id="GO:0031594">
    <property type="term" value="C:neuromuscular junction"/>
    <property type="evidence" value="ECO:0000250"/>
    <property type="project" value="BHF-UCL"/>
</dbReference>
<dbReference type="GO" id="GO:0033268">
    <property type="term" value="C:node of Ranvier"/>
    <property type="evidence" value="ECO:0000314"/>
    <property type="project" value="BHF-UCL"/>
</dbReference>
<dbReference type="GO" id="GO:0033270">
    <property type="term" value="C:paranode region of axon"/>
    <property type="evidence" value="ECO:0000314"/>
    <property type="project" value="MGI"/>
</dbReference>
<dbReference type="GO" id="GO:0005886">
    <property type="term" value="C:plasma membrane"/>
    <property type="evidence" value="ECO:0000250"/>
    <property type="project" value="BHF-UCL"/>
</dbReference>
<dbReference type="GO" id="GO:0098794">
    <property type="term" value="C:postsynapse"/>
    <property type="evidence" value="ECO:0000314"/>
    <property type="project" value="SynGO"/>
</dbReference>
<dbReference type="GO" id="GO:0014069">
    <property type="term" value="C:postsynaptic density"/>
    <property type="evidence" value="ECO:0000314"/>
    <property type="project" value="SynGO"/>
</dbReference>
<dbReference type="GO" id="GO:0045211">
    <property type="term" value="C:postsynaptic membrane"/>
    <property type="evidence" value="ECO:0000250"/>
    <property type="project" value="BHF-UCL"/>
</dbReference>
<dbReference type="GO" id="GO:0042383">
    <property type="term" value="C:sarcolemma"/>
    <property type="evidence" value="ECO:0000250"/>
    <property type="project" value="BHF-UCL"/>
</dbReference>
<dbReference type="GO" id="GO:0016529">
    <property type="term" value="C:sarcoplasmic reticulum"/>
    <property type="evidence" value="ECO:0000250"/>
    <property type="project" value="BHF-UCL"/>
</dbReference>
<dbReference type="GO" id="GO:0014731">
    <property type="term" value="C:spectrin-associated cytoskeleton"/>
    <property type="evidence" value="ECO:0000250"/>
    <property type="project" value="BHF-UCL"/>
</dbReference>
<dbReference type="GO" id="GO:0045202">
    <property type="term" value="C:synapse"/>
    <property type="evidence" value="ECO:0000314"/>
    <property type="project" value="MGI"/>
</dbReference>
<dbReference type="GO" id="GO:0030315">
    <property type="term" value="C:T-tubule"/>
    <property type="evidence" value="ECO:0000250"/>
    <property type="project" value="BHF-UCL"/>
</dbReference>
<dbReference type="GO" id="GO:0030018">
    <property type="term" value="C:Z disc"/>
    <property type="evidence" value="ECO:0000250"/>
    <property type="project" value="BHF-UCL"/>
</dbReference>
<dbReference type="GO" id="GO:0045296">
    <property type="term" value="F:cadherin binding"/>
    <property type="evidence" value="ECO:0000250"/>
    <property type="project" value="BHF-UCL"/>
</dbReference>
<dbReference type="GO" id="GO:0099103">
    <property type="term" value="F:channel activator activity"/>
    <property type="evidence" value="ECO:0000250"/>
    <property type="project" value="BHF-UCL"/>
</dbReference>
<dbReference type="GO" id="GO:0008092">
    <property type="term" value="F:cytoskeletal protein binding"/>
    <property type="evidence" value="ECO:0000250"/>
    <property type="project" value="BHF-UCL"/>
</dbReference>
<dbReference type="GO" id="GO:0030674">
    <property type="term" value="F:protein-macromolecule adaptor activity"/>
    <property type="evidence" value="ECO:0000250"/>
    <property type="project" value="BHF-UCL"/>
</dbReference>
<dbReference type="GO" id="GO:0017080">
    <property type="term" value="F:sodium channel regulator activity"/>
    <property type="evidence" value="ECO:0000250"/>
    <property type="project" value="BHF-UCL"/>
</dbReference>
<dbReference type="GO" id="GO:0030507">
    <property type="term" value="F:spectrin binding"/>
    <property type="evidence" value="ECO:0000250"/>
    <property type="project" value="BHF-UCL"/>
</dbReference>
<dbReference type="GO" id="GO:0044325">
    <property type="term" value="F:transmembrane transporter binding"/>
    <property type="evidence" value="ECO:0000353"/>
    <property type="project" value="UniProtKB"/>
</dbReference>
<dbReference type="GO" id="GO:0007411">
    <property type="term" value="P:axon guidance"/>
    <property type="evidence" value="ECO:0000315"/>
    <property type="project" value="MGI"/>
</dbReference>
<dbReference type="GO" id="GO:0007409">
    <property type="term" value="P:axonogenesis"/>
    <property type="evidence" value="ECO:0000315"/>
    <property type="project" value="BHF-UCL"/>
</dbReference>
<dbReference type="GO" id="GO:0071286">
    <property type="term" value="P:cellular response to magnesium ion"/>
    <property type="evidence" value="ECO:0000315"/>
    <property type="project" value="UniProtKB"/>
</dbReference>
<dbReference type="GO" id="GO:0010960">
    <property type="term" value="P:magnesium ion homeostasis"/>
    <property type="evidence" value="ECO:0000315"/>
    <property type="project" value="UniProtKB"/>
</dbReference>
<dbReference type="GO" id="GO:0071709">
    <property type="term" value="P:membrane assembly"/>
    <property type="evidence" value="ECO:0000250"/>
    <property type="project" value="BHF-UCL"/>
</dbReference>
<dbReference type="GO" id="GO:1902260">
    <property type="term" value="P:negative regulation of delayed rectifier potassium channel activity"/>
    <property type="evidence" value="ECO:0000315"/>
    <property type="project" value="UniProtKB"/>
</dbReference>
<dbReference type="GO" id="GO:0007528">
    <property type="term" value="P:neuromuscular junction development"/>
    <property type="evidence" value="ECO:0000250"/>
    <property type="project" value="BHF-UCL"/>
</dbReference>
<dbReference type="GO" id="GO:0019228">
    <property type="term" value="P:neuronal action potential"/>
    <property type="evidence" value="ECO:0000315"/>
    <property type="project" value="BHF-UCL"/>
</dbReference>
<dbReference type="GO" id="GO:0045760">
    <property type="term" value="P:positive regulation of action potential"/>
    <property type="evidence" value="ECO:0000304"/>
    <property type="project" value="BHF-UCL"/>
</dbReference>
<dbReference type="GO" id="GO:0010650">
    <property type="term" value="P:positive regulation of cell communication by electrical coupling"/>
    <property type="evidence" value="ECO:0000250"/>
    <property type="project" value="BHF-UCL"/>
</dbReference>
<dbReference type="GO" id="GO:0010628">
    <property type="term" value="P:positive regulation of gene expression"/>
    <property type="evidence" value="ECO:0000250"/>
    <property type="project" value="BHF-UCL"/>
</dbReference>
<dbReference type="GO" id="GO:0034112">
    <property type="term" value="P:positive regulation of homotypic cell-cell adhesion"/>
    <property type="evidence" value="ECO:0000250"/>
    <property type="project" value="BHF-UCL"/>
</dbReference>
<dbReference type="GO" id="GO:1900827">
    <property type="term" value="P:positive regulation of membrane depolarization during cardiac muscle cell action potential"/>
    <property type="evidence" value="ECO:0000250"/>
    <property type="project" value="BHF-UCL"/>
</dbReference>
<dbReference type="GO" id="GO:0045838">
    <property type="term" value="P:positive regulation of membrane potential"/>
    <property type="evidence" value="ECO:0000250"/>
    <property type="project" value="BHF-UCL"/>
</dbReference>
<dbReference type="GO" id="GO:0090314">
    <property type="term" value="P:positive regulation of protein targeting to membrane"/>
    <property type="evidence" value="ECO:0000250"/>
    <property type="project" value="BHF-UCL"/>
</dbReference>
<dbReference type="GO" id="GO:0010765">
    <property type="term" value="P:positive regulation of sodium ion transport"/>
    <property type="evidence" value="ECO:0000250"/>
    <property type="project" value="BHF-UCL"/>
</dbReference>
<dbReference type="GO" id="GO:0099612">
    <property type="term" value="P:protein localization to axon"/>
    <property type="evidence" value="ECO:0000315"/>
    <property type="project" value="MGI"/>
</dbReference>
<dbReference type="GO" id="GO:0072659">
    <property type="term" value="P:protein localization to plasma membrane"/>
    <property type="evidence" value="ECO:0000314"/>
    <property type="project" value="BHF-UCL"/>
</dbReference>
<dbReference type="GO" id="GO:0043266">
    <property type="term" value="P:regulation of potassium ion transport"/>
    <property type="evidence" value="ECO:0000250"/>
    <property type="project" value="BHF-UCL"/>
</dbReference>
<dbReference type="GO" id="GO:0007165">
    <property type="term" value="P:signal transduction"/>
    <property type="evidence" value="ECO:0007669"/>
    <property type="project" value="InterPro"/>
</dbReference>
<dbReference type="GO" id="GO:0050808">
    <property type="term" value="P:synapse organization"/>
    <property type="evidence" value="ECO:0000315"/>
    <property type="project" value="MGI"/>
</dbReference>
<dbReference type="CDD" id="cd08803">
    <property type="entry name" value="Death_ank3"/>
    <property type="match status" value="1"/>
</dbReference>
<dbReference type="FunFam" id="1.25.40.20:FF:000003">
    <property type="entry name" value="Ankyrin, isoform B"/>
    <property type="match status" value="1"/>
</dbReference>
<dbReference type="FunFam" id="1.25.40.20:FF:000001">
    <property type="entry name" value="Ankyrin-2 isoform 2"/>
    <property type="match status" value="1"/>
</dbReference>
<dbReference type="FunFam" id="1.25.40.20:FF:000002">
    <property type="entry name" value="Ankyrin-2 isoform 2"/>
    <property type="match status" value="1"/>
</dbReference>
<dbReference type="FunFam" id="1.10.533.10:FF:000002">
    <property type="entry name" value="Ankyrin-3 isoform 2"/>
    <property type="match status" value="1"/>
</dbReference>
<dbReference type="FunFam" id="2.60.220.30:FF:000001">
    <property type="entry name" value="Ankyrin-3 isoform 2"/>
    <property type="match status" value="1"/>
</dbReference>
<dbReference type="FunFam" id="2.60.220.30:FF:000002">
    <property type="entry name" value="Ankyrin-3 isoform 2"/>
    <property type="match status" value="1"/>
</dbReference>
<dbReference type="FunFam" id="2.60.40.2660:FF:000001">
    <property type="entry name" value="Ankyrin-3 isoform 2"/>
    <property type="match status" value="1"/>
</dbReference>
<dbReference type="Gene3D" id="2.60.220.30">
    <property type="match status" value="2"/>
</dbReference>
<dbReference type="Gene3D" id="2.60.40.2660">
    <property type="match status" value="1"/>
</dbReference>
<dbReference type="Gene3D" id="1.25.40.20">
    <property type="entry name" value="Ankyrin repeat-containing domain"/>
    <property type="match status" value="3"/>
</dbReference>
<dbReference type="Gene3D" id="1.10.533.10">
    <property type="entry name" value="Death Domain, Fas"/>
    <property type="match status" value="1"/>
</dbReference>
<dbReference type="InterPro" id="IPR037971">
    <property type="entry name" value="Ank3_Death"/>
</dbReference>
<dbReference type="InterPro" id="IPR002110">
    <property type="entry name" value="Ankyrin_rpt"/>
</dbReference>
<dbReference type="InterPro" id="IPR036770">
    <property type="entry name" value="Ankyrin_rpt-contain_sf"/>
</dbReference>
<dbReference type="InterPro" id="IPR040745">
    <property type="entry name" value="Ankyrin_UPA"/>
</dbReference>
<dbReference type="InterPro" id="IPR011029">
    <property type="entry name" value="DEATH-like_dom_sf"/>
</dbReference>
<dbReference type="InterPro" id="IPR000488">
    <property type="entry name" value="Death_dom"/>
</dbReference>
<dbReference type="InterPro" id="IPR051165">
    <property type="entry name" value="Multifunctional_ANK_Repeat"/>
</dbReference>
<dbReference type="InterPro" id="IPR000906">
    <property type="entry name" value="ZU5_dom"/>
</dbReference>
<dbReference type="PANTHER" id="PTHR24123:SF74">
    <property type="entry name" value="ANKYRIN 3"/>
    <property type="match status" value="1"/>
</dbReference>
<dbReference type="PANTHER" id="PTHR24123">
    <property type="entry name" value="ANKYRIN REPEAT-CONTAINING"/>
    <property type="match status" value="1"/>
</dbReference>
<dbReference type="Pfam" id="PF00023">
    <property type="entry name" value="Ank"/>
    <property type="match status" value="2"/>
</dbReference>
<dbReference type="Pfam" id="PF12796">
    <property type="entry name" value="Ank_2"/>
    <property type="match status" value="8"/>
</dbReference>
<dbReference type="Pfam" id="PF13637">
    <property type="entry name" value="Ank_4"/>
    <property type="match status" value="1"/>
</dbReference>
<dbReference type="Pfam" id="PF00531">
    <property type="entry name" value="Death"/>
    <property type="match status" value="1"/>
</dbReference>
<dbReference type="Pfam" id="PF17809">
    <property type="entry name" value="UPA_2"/>
    <property type="match status" value="1"/>
</dbReference>
<dbReference type="Pfam" id="PF00791">
    <property type="entry name" value="ZU5"/>
    <property type="match status" value="1"/>
</dbReference>
<dbReference type="PRINTS" id="PR01415">
    <property type="entry name" value="ANKYRIN"/>
</dbReference>
<dbReference type="SMART" id="SM00248">
    <property type="entry name" value="ANK"/>
    <property type="match status" value="22"/>
</dbReference>
<dbReference type="SMART" id="SM00005">
    <property type="entry name" value="DEATH"/>
    <property type="match status" value="1"/>
</dbReference>
<dbReference type="SMART" id="SM00218">
    <property type="entry name" value="ZU5"/>
    <property type="match status" value="1"/>
</dbReference>
<dbReference type="SUPFAM" id="SSF48403">
    <property type="entry name" value="Ankyrin repeat"/>
    <property type="match status" value="3"/>
</dbReference>
<dbReference type="SUPFAM" id="SSF47986">
    <property type="entry name" value="DEATH domain"/>
    <property type="match status" value="1"/>
</dbReference>
<dbReference type="PROSITE" id="PS50297">
    <property type="entry name" value="ANK_REP_REGION"/>
    <property type="match status" value="1"/>
</dbReference>
<dbReference type="PROSITE" id="PS50088">
    <property type="entry name" value="ANK_REPEAT"/>
    <property type="match status" value="21"/>
</dbReference>
<dbReference type="PROSITE" id="PS50017">
    <property type="entry name" value="DEATH_DOMAIN"/>
    <property type="match status" value="1"/>
</dbReference>
<dbReference type="PROSITE" id="PS51145">
    <property type="entry name" value="ZU5"/>
    <property type="match status" value="2"/>
</dbReference>
<accession>G5E8K5</accession>
<accession>G5E8K4</accession>
<accession>O08866</accession>
<accession>O08867</accession>
<accession>Q3TSJ8</accession>
<accession>Q4U205</accession>
<accession>Q4U206</accession>
<accession>Q4U256</accession>
<accession>Q4U260</accession>
<accession>Q61305</accession>
<accession>Q61306</accession>
<accession>Q61307</accession>
<accession>Q61308</accession>
<accession>Q61309</accession>
<accession>Q61310</accession>
<accession>Q8CBN3</accession>
<accession>Q8VC68</accession>
<organism>
    <name type="scientific">Mus musculus</name>
    <name type="common">Mouse</name>
    <dbReference type="NCBI Taxonomy" id="10090"/>
    <lineage>
        <taxon>Eukaryota</taxon>
        <taxon>Metazoa</taxon>
        <taxon>Chordata</taxon>
        <taxon>Craniata</taxon>
        <taxon>Vertebrata</taxon>
        <taxon>Euteleostomi</taxon>
        <taxon>Mammalia</taxon>
        <taxon>Eutheria</taxon>
        <taxon>Euarchontoglires</taxon>
        <taxon>Glires</taxon>
        <taxon>Rodentia</taxon>
        <taxon>Myomorpha</taxon>
        <taxon>Muroidea</taxon>
        <taxon>Muridae</taxon>
        <taxon>Murinae</taxon>
        <taxon>Mus</taxon>
        <taxon>Mus</taxon>
    </lineage>
</organism>
<protein>
    <recommendedName>
        <fullName>Ankyrin-3</fullName>
        <shortName>ANK-3</shortName>
    </recommendedName>
    <alternativeName>
        <fullName>Ankyrin-G</fullName>
    </alternativeName>
</protein>
<gene>
    <name type="primary">Ank3</name>
</gene>
<name>ANK3_MOUSE</name>
<reference key="1">
    <citation type="journal article" date="1995" name="J. Cell Biol.">
        <title>Ank3 (epithelial ankyrin), a widely distributed new member of the ankyrin gene family and the major ankyrin in kidney, is expressed in alternatively spliced forms, including forms that lack the repeat domain.</title>
        <authorList>
            <person name="Peters L.L."/>
            <person name="John K.M."/>
            <person name="Lu F.M."/>
            <person name="Eicher E.M."/>
            <person name="Higgins A."/>
            <person name="Yialamas M."/>
            <person name="Turtzo L.C."/>
            <person name="Otsuka A.J."/>
            <person name="Lux S.E."/>
        </authorList>
    </citation>
    <scope>NUCLEOTIDE SEQUENCE [MRNA] (ISOFORMS 1; 4 AND 6)</scope>
    <scope>TISSUE SPECIFICITY</scope>
    <source>
        <strain>C57BL/6J</strain>
        <tissue>Kidney</tissue>
    </source>
</reference>
<reference key="2">
    <citation type="journal article" date="2005" name="Science">
        <title>The transcriptional landscape of the mammalian genome.</title>
        <authorList>
            <person name="Carninci P."/>
            <person name="Kasukawa T."/>
            <person name="Katayama S."/>
            <person name="Gough J."/>
            <person name="Frith M.C."/>
            <person name="Maeda N."/>
            <person name="Oyama R."/>
            <person name="Ravasi T."/>
            <person name="Lenhard B."/>
            <person name="Wells C."/>
            <person name="Kodzius R."/>
            <person name="Shimokawa K."/>
            <person name="Bajic V.B."/>
            <person name="Brenner S.E."/>
            <person name="Batalov S."/>
            <person name="Forrest A.R."/>
            <person name="Zavolan M."/>
            <person name="Davis M.J."/>
            <person name="Wilming L.G."/>
            <person name="Aidinis V."/>
            <person name="Allen J.E."/>
            <person name="Ambesi-Impiombato A."/>
            <person name="Apweiler R."/>
            <person name="Aturaliya R.N."/>
            <person name="Bailey T.L."/>
            <person name="Bansal M."/>
            <person name="Baxter L."/>
            <person name="Beisel K.W."/>
            <person name="Bersano T."/>
            <person name="Bono H."/>
            <person name="Chalk A.M."/>
            <person name="Chiu K.P."/>
            <person name="Choudhary V."/>
            <person name="Christoffels A."/>
            <person name="Clutterbuck D.R."/>
            <person name="Crowe M.L."/>
            <person name="Dalla E."/>
            <person name="Dalrymple B.P."/>
            <person name="de Bono B."/>
            <person name="Della Gatta G."/>
            <person name="di Bernardo D."/>
            <person name="Down T."/>
            <person name="Engstrom P."/>
            <person name="Fagiolini M."/>
            <person name="Faulkner G."/>
            <person name="Fletcher C.F."/>
            <person name="Fukushima T."/>
            <person name="Furuno M."/>
            <person name="Futaki S."/>
            <person name="Gariboldi M."/>
            <person name="Georgii-Hemming P."/>
            <person name="Gingeras T.R."/>
            <person name="Gojobori T."/>
            <person name="Green R.E."/>
            <person name="Gustincich S."/>
            <person name="Harbers M."/>
            <person name="Hayashi Y."/>
            <person name="Hensch T.K."/>
            <person name="Hirokawa N."/>
            <person name="Hill D."/>
            <person name="Huminiecki L."/>
            <person name="Iacono M."/>
            <person name="Ikeo K."/>
            <person name="Iwama A."/>
            <person name="Ishikawa T."/>
            <person name="Jakt M."/>
            <person name="Kanapin A."/>
            <person name="Katoh M."/>
            <person name="Kawasawa Y."/>
            <person name="Kelso J."/>
            <person name="Kitamura H."/>
            <person name="Kitano H."/>
            <person name="Kollias G."/>
            <person name="Krishnan S.P."/>
            <person name="Kruger A."/>
            <person name="Kummerfeld S.K."/>
            <person name="Kurochkin I.V."/>
            <person name="Lareau L.F."/>
            <person name="Lazarevic D."/>
            <person name="Lipovich L."/>
            <person name="Liu J."/>
            <person name="Liuni S."/>
            <person name="McWilliam S."/>
            <person name="Madan Babu M."/>
            <person name="Madera M."/>
            <person name="Marchionni L."/>
            <person name="Matsuda H."/>
            <person name="Matsuzawa S."/>
            <person name="Miki H."/>
            <person name="Mignone F."/>
            <person name="Miyake S."/>
            <person name="Morris K."/>
            <person name="Mottagui-Tabar S."/>
            <person name="Mulder N."/>
            <person name="Nakano N."/>
            <person name="Nakauchi H."/>
            <person name="Ng P."/>
            <person name="Nilsson R."/>
            <person name="Nishiguchi S."/>
            <person name="Nishikawa S."/>
            <person name="Nori F."/>
            <person name="Ohara O."/>
            <person name="Okazaki Y."/>
            <person name="Orlando V."/>
            <person name="Pang K.C."/>
            <person name="Pavan W.J."/>
            <person name="Pavesi G."/>
            <person name="Pesole G."/>
            <person name="Petrovsky N."/>
            <person name="Piazza S."/>
            <person name="Reed J."/>
            <person name="Reid J.F."/>
            <person name="Ring B.Z."/>
            <person name="Ringwald M."/>
            <person name="Rost B."/>
            <person name="Ruan Y."/>
            <person name="Salzberg S.L."/>
            <person name="Sandelin A."/>
            <person name="Schneider C."/>
            <person name="Schoenbach C."/>
            <person name="Sekiguchi K."/>
            <person name="Semple C.A."/>
            <person name="Seno S."/>
            <person name="Sessa L."/>
            <person name="Sheng Y."/>
            <person name="Shibata Y."/>
            <person name="Shimada H."/>
            <person name="Shimada K."/>
            <person name="Silva D."/>
            <person name="Sinclair B."/>
            <person name="Sperling S."/>
            <person name="Stupka E."/>
            <person name="Sugiura K."/>
            <person name="Sultana R."/>
            <person name="Takenaka Y."/>
            <person name="Taki K."/>
            <person name="Tammoja K."/>
            <person name="Tan S.L."/>
            <person name="Tang S."/>
            <person name="Taylor M.S."/>
            <person name="Tegner J."/>
            <person name="Teichmann S.A."/>
            <person name="Ueda H.R."/>
            <person name="van Nimwegen E."/>
            <person name="Verardo R."/>
            <person name="Wei C.L."/>
            <person name="Yagi K."/>
            <person name="Yamanishi H."/>
            <person name="Zabarovsky E."/>
            <person name="Zhu S."/>
            <person name="Zimmer A."/>
            <person name="Hide W."/>
            <person name="Bult C."/>
            <person name="Grimmond S.M."/>
            <person name="Teasdale R.D."/>
            <person name="Liu E.T."/>
            <person name="Brusic V."/>
            <person name="Quackenbush J."/>
            <person name="Wahlestedt C."/>
            <person name="Mattick J.S."/>
            <person name="Hume D.A."/>
            <person name="Kai C."/>
            <person name="Sasaki D."/>
            <person name="Tomaru Y."/>
            <person name="Fukuda S."/>
            <person name="Kanamori-Katayama M."/>
            <person name="Suzuki M."/>
            <person name="Aoki J."/>
            <person name="Arakawa T."/>
            <person name="Iida J."/>
            <person name="Imamura K."/>
            <person name="Itoh M."/>
            <person name="Kato T."/>
            <person name="Kawaji H."/>
            <person name="Kawagashira N."/>
            <person name="Kawashima T."/>
            <person name="Kojima M."/>
            <person name="Kondo S."/>
            <person name="Konno H."/>
            <person name="Nakano K."/>
            <person name="Ninomiya N."/>
            <person name="Nishio T."/>
            <person name="Okada M."/>
            <person name="Plessy C."/>
            <person name="Shibata K."/>
            <person name="Shiraki T."/>
            <person name="Suzuki S."/>
            <person name="Tagami M."/>
            <person name="Waki K."/>
            <person name="Watahiki A."/>
            <person name="Okamura-Oho Y."/>
            <person name="Suzuki H."/>
            <person name="Kawai J."/>
            <person name="Hayashizaki Y."/>
        </authorList>
    </citation>
    <scope>NUCLEOTIDE SEQUENCE [LARGE SCALE MRNA] (ISOFORM 5)</scope>
    <scope>NUCLEOTIDE SEQUENCE [LARGE SCALE MRNA] OF 1-1726 (ISOFORMS 4/5/6)</scope>
    <source>
        <strain>C57BL/6J</strain>
        <tissue>Urinary bladder</tissue>
    </source>
</reference>
<reference key="3">
    <citation type="journal article" date="2009" name="PLoS Biol.">
        <title>Lineage-specific biology revealed by a finished genome assembly of the mouse.</title>
        <authorList>
            <person name="Church D.M."/>
            <person name="Goodstadt L."/>
            <person name="Hillier L.W."/>
            <person name="Zody M.C."/>
            <person name="Goldstein S."/>
            <person name="She X."/>
            <person name="Bult C.J."/>
            <person name="Agarwala R."/>
            <person name="Cherry J.L."/>
            <person name="DiCuccio M."/>
            <person name="Hlavina W."/>
            <person name="Kapustin Y."/>
            <person name="Meric P."/>
            <person name="Maglott D."/>
            <person name="Birtle Z."/>
            <person name="Marques A.C."/>
            <person name="Graves T."/>
            <person name="Zhou S."/>
            <person name="Teague B."/>
            <person name="Potamousis K."/>
            <person name="Churas C."/>
            <person name="Place M."/>
            <person name="Herschleb J."/>
            <person name="Runnheim R."/>
            <person name="Forrest D."/>
            <person name="Amos-Landgraf J."/>
            <person name="Schwartz D.C."/>
            <person name="Cheng Z."/>
            <person name="Lindblad-Toh K."/>
            <person name="Eichler E.E."/>
            <person name="Ponting C.P."/>
        </authorList>
    </citation>
    <scope>NUCLEOTIDE SEQUENCE [LARGE SCALE GENOMIC DNA]</scope>
    <source>
        <strain>C57BL/6J</strain>
    </source>
</reference>
<reference key="4">
    <citation type="submission" date="2005-09" db="EMBL/GenBank/DDBJ databases">
        <authorList>
            <person name="Mural R.J."/>
            <person name="Adams M.D."/>
            <person name="Myers E.W."/>
            <person name="Smith H.O."/>
            <person name="Venter J.C."/>
        </authorList>
    </citation>
    <scope>NUCLEOTIDE SEQUENCE [LARGE SCALE GENOMIC DNA]</scope>
</reference>
<reference key="5">
    <citation type="journal article" date="2004" name="Genome Res.">
        <title>The status, quality, and expansion of the NIH full-length cDNA project: the Mammalian Gene Collection (MGC).</title>
        <authorList>
            <consortium name="The MGC Project Team"/>
        </authorList>
    </citation>
    <scope>NUCLEOTIDE SEQUENCE [LARGE SCALE MRNA] (ISOFORM 2)</scope>
    <source>
        <strain>FVB/N</strain>
        <tissue>Salivary gland</tissue>
    </source>
</reference>
<reference key="6">
    <citation type="journal article" date="1997" name="J. Cell Biol.">
        <title>Isoforms of ankyrin-3 that lack the NH2-terminal repeats associate with mouse macrophage lysosomes.</title>
        <authorList>
            <person name="Hoock T.C."/>
            <person name="Peters L.L."/>
            <person name="Lux S.E."/>
        </authorList>
    </citation>
    <scope>NUCLEOTIDE SEQUENCE [MRNA] OF 742-1961 (ISOFORMS 2 AND 3)</scope>
    <scope>SUBCELLULAR LOCATION</scope>
    <scope>TISSUE SPECIFICITY</scope>
    <source>
        <strain>C3H/HeJ</strain>
        <tissue>Bone marrow macrophage</tissue>
    </source>
</reference>
<reference key="7">
    <citation type="journal article" date="2008" name="Cell">
        <title>An ankyrin-based mechanism for functional organization of dystrophin and dystroglycan.</title>
        <authorList>
            <person name="Ayalon G."/>
            <person name="Davis J.Q."/>
            <person name="Scotland P.B."/>
            <person name="Bennett V."/>
        </authorList>
    </citation>
    <scope>FUNCTION</scope>
    <scope>INTERACTION WITH DMD</scope>
    <scope>SUBCELLULAR LOCATION</scope>
</reference>
<reference key="8">
    <citation type="journal article" date="2008" name="J. Neurosci.">
        <title>Schwannomin-interacting protein-1 isoform IQCJ-SCHIP-1 is a late component of nodes of Ranvier and axon initial segments.</title>
        <authorList>
            <person name="Martin P.M."/>
            <person name="Carnaud M."/>
            <person name="Garcia del Cano G."/>
            <person name="Irondelle M."/>
            <person name="Irinopoulou T."/>
            <person name="Girault J.A."/>
            <person name="Dargent B."/>
            <person name="Goutebroze L."/>
        </authorList>
    </citation>
    <scope>INTERACTION WITH SCHIP1</scope>
</reference>
<reference key="9">
    <citation type="journal article" date="2010" name="Cell">
        <title>A tissue-specific atlas of mouse protein phosphorylation and expression.</title>
        <authorList>
            <person name="Huttlin E.L."/>
            <person name="Jedrychowski M.P."/>
            <person name="Elias J.E."/>
            <person name="Goswami T."/>
            <person name="Rad R."/>
            <person name="Beausoleil S.A."/>
            <person name="Villen J."/>
            <person name="Haas W."/>
            <person name="Sowa M.E."/>
            <person name="Gygi S.P."/>
        </authorList>
    </citation>
    <scope>PHOSPHORYLATION [LARGE SCALE ANALYSIS] AT SER-830; SER-850; SER-873; SER-923; SER-1114; SER-1451; SER-1462; SER-1470; SER-1473 AND SER-1795</scope>
    <scope>PHOSPHORYLATION [LARGE SCALE ANALYSIS] AT SER-1560 (ISOFORM 2)</scope>
    <scope>PHOSPHORYLATION [LARGE SCALE ANALYSIS] AT SER-830 (ISOFORMS 2 AND 3)</scope>
    <scope>PHOSPHORYLATION [LARGE SCALE ANALYSIS] AT SER-732 (ISOFORM 6)</scope>
    <scope>IDENTIFICATION BY MASS SPECTROMETRY [LARGE SCALE ANALYSIS]</scope>
    <source>
        <tissue>Brain</tissue>
        <tissue>Heart</tissue>
        <tissue>Kidney</tissue>
        <tissue>Liver</tissue>
        <tissue>Lung</tissue>
        <tissue>Pancreas</tissue>
        <tissue>Spleen</tissue>
    </source>
</reference>
<reference key="10">
    <citation type="journal article" date="2011" name="Exp. Cell Res.">
        <title>Novel interactions of ankyrins-G at the costameres: the muscle-specific Obscurin/Titin-Binding-related Domain (OTBD) binds plectin and filamin C.</title>
        <authorList>
            <person name="Maiweilidan Y."/>
            <person name="Klauza I."/>
            <person name="Kordeli E."/>
        </authorList>
    </citation>
    <scope>DEVELOPMENTAL STAGE</scope>
</reference>
<reference key="11">
    <citation type="journal article" date="2014" name="Kidney Int.">
        <title>Ankyrin-3 is a novel binding partner of the voltage-gated potassium channel Kv1.1 implicated in renal magnesium handling.</title>
        <authorList>
            <person name="San-Cristobal P."/>
            <person name="Lainez S."/>
            <person name="Dimke H."/>
            <person name="de Graaf M.J."/>
            <person name="Hoenderop J.G."/>
            <person name="Bindels R.J."/>
        </authorList>
    </citation>
    <scope>FUNCTION</scope>
    <scope>INTERACTION WITH KCNA1</scope>
    <scope>IDENTIFICATION BY MASS SPECTROMETRY</scope>
    <scope>INDUCTION BY MAGNESIUM</scope>
    <scope>TISSUE SPECIFICITY</scope>
</reference>
<feature type="chain" id="PRO_0000419782" description="Ankyrin-3">
    <location>
        <begin position="1"/>
        <end position="1961"/>
    </location>
</feature>
<feature type="repeat" description="ANK 1">
    <location>
        <begin position="56"/>
        <end position="85"/>
    </location>
</feature>
<feature type="repeat" description="ANK 2">
    <location>
        <begin position="89"/>
        <end position="118"/>
    </location>
</feature>
<feature type="repeat" description="ANK 3">
    <location>
        <begin position="122"/>
        <end position="151"/>
    </location>
</feature>
<feature type="repeat" description="ANK 4">
    <location>
        <begin position="155"/>
        <end position="184"/>
    </location>
</feature>
<feature type="repeat" description="ANK 5">
    <location>
        <begin position="186"/>
        <end position="213"/>
    </location>
</feature>
<feature type="repeat" description="ANK 6">
    <location>
        <begin position="217"/>
        <end position="246"/>
    </location>
</feature>
<feature type="repeat" description="ANK 7">
    <location>
        <begin position="250"/>
        <end position="279"/>
    </location>
</feature>
<feature type="repeat" description="ANK 8">
    <location>
        <begin position="283"/>
        <end position="312"/>
    </location>
</feature>
<feature type="repeat" description="ANK 9">
    <location>
        <begin position="316"/>
        <end position="345"/>
    </location>
</feature>
<feature type="repeat" description="ANK 10">
    <location>
        <begin position="349"/>
        <end position="378"/>
    </location>
</feature>
<feature type="repeat" description="ANK 11">
    <location>
        <begin position="382"/>
        <end position="411"/>
    </location>
</feature>
<feature type="repeat" description="ANK 12">
    <location>
        <begin position="415"/>
        <end position="444"/>
    </location>
</feature>
<feature type="repeat" description="ANK 13">
    <location>
        <begin position="448"/>
        <end position="477"/>
    </location>
</feature>
<feature type="repeat" description="ANK 14">
    <location>
        <begin position="481"/>
        <end position="510"/>
    </location>
</feature>
<feature type="repeat" description="ANK 15">
    <location>
        <begin position="514"/>
        <end position="543"/>
    </location>
</feature>
<feature type="repeat" description="ANK 16">
    <location>
        <begin position="547"/>
        <end position="576"/>
    </location>
</feature>
<feature type="repeat" description="ANK 17">
    <location>
        <begin position="580"/>
        <end position="609"/>
    </location>
</feature>
<feature type="repeat" description="ANK 18">
    <location>
        <begin position="613"/>
        <end position="642"/>
    </location>
</feature>
<feature type="repeat" description="ANK 19">
    <location>
        <begin position="646"/>
        <end position="675"/>
    </location>
</feature>
<feature type="repeat" description="ANK 20">
    <location>
        <begin position="679"/>
        <end position="708"/>
    </location>
</feature>
<feature type="repeat" description="ANK 21">
    <location>
        <begin position="712"/>
        <end position="741"/>
    </location>
</feature>
<feature type="repeat" description="ANK 22">
    <location>
        <begin position="745"/>
        <end position="774"/>
    </location>
</feature>
<feature type="repeat" description="ANK 23">
    <location>
        <begin position="778"/>
        <end position="807"/>
    </location>
</feature>
<feature type="domain" description="ZU5 1" evidence="5">
    <location>
        <begin position="985"/>
        <end position="1140"/>
    </location>
</feature>
<feature type="domain" description="ZU5 2" evidence="5">
    <location>
        <begin position="1142"/>
        <end position="1289"/>
    </location>
</feature>
<feature type="domain" description="Death" evidence="4">
    <location>
        <begin position="1478"/>
        <end position="1562"/>
    </location>
</feature>
<feature type="region of interest" description="Disordered" evidence="6">
    <location>
        <begin position="1"/>
        <end position="25"/>
    </location>
</feature>
<feature type="region of interest" description="UPA domain" evidence="1">
    <location>
        <begin position="1274"/>
        <end position="1408"/>
    </location>
</feature>
<feature type="region of interest" description="Disordered" evidence="6">
    <location>
        <begin position="1606"/>
        <end position="1678"/>
    </location>
</feature>
<feature type="region of interest" description="Disordered" evidence="6">
    <location>
        <begin position="1698"/>
        <end position="1740"/>
    </location>
</feature>
<feature type="region of interest" description="Disordered" evidence="6">
    <location>
        <begin position="1784"/>
        <end position="1818"/>
    </location>
</feature>
<feature type="region of interest" description="Disordered" evidence="6">
    <location>
        <begin position="1844"/>
        <end position="1884"/>
    </location>
</feature>
<feature type="region of interest" description="Disordered" evidence="6">
    <location>
        <begin position="1915"/>
        <end position="1961"/>
    </location>
</feature>
<feature type="compositionally biased region" description="Basic and acidic residues" evidence="6">
    <location>
        <begin position="1"/>
        <end position="10"/>
    </location>
</feature>
<feature type="compositionally biased region" description="Basic residues" evidence="6">
    <location>
        <begin position="11"/>
        <end position="20"/>
    </location>
</feature>
<feature type="compositionally biased region" description="Basic and acidic residues" evidence="6">
    <location>
        <begin position="1725"/>
        <end position="1740"/>
    </location>
</feature>
<feature type="compositionally biased region" description="Polar residues" evidence="6">
    <location>
        <begin position="1784"/>
        <end position="1795"/>
    </location>
</feature>
<feature type="compositionally biased region" description="Basic and acidic residues" evidence="6">
    <location>
        <begin position="1808"/>
        <end position="1818"/>
    </location>
</feature>
<feature type="compositionally biased region" description="Basic and acidic residues" evidence="6">
    <location>
        <begin position="1933"/>
        <end position="1961"/>
    </location>
</feature>
<feature type="modified residue" description="Phosphoserine" evidence="3">
    <location>
        <position position="22"/>
    </location>
</feature>
<feature type="modified residue" description="Phosphoserine" evidence="2">
    <location>
        <position position="606"/>
    </location>
</feature>
<feature type="modified residue" description="Phosphoserine" evidence="18">
    <location>
        <position position="830"/>
    </location>
</feature>
<feature type="modified residue" description="Phosphoserine" evidence="2">
    <location>
        <position position="844"/>
    </location>
</feature>
<feature type="modified residue" description="Phosphoserine" evidence="18">
    <location>
        <position position="850"/>
    </location>
</feature>
<feature type="modified residue" description="Phosphoserine" evidence="18">
    <location>
        <position position="873"/>
    </location>
</feature>
<feature type="modified residue" description="Phosphoserine" evidence="2">
    <location>
        <position position="914"/>
    </location>
</feature>
<feature type="modified residue" description="Phosphoserine" evidence="2">
    <location>
        <position position="917"/>
    </location>
</feature>
<feature type="modified residue" description="Phosphoserine" evidence="18">
    <location>
        <position position="923"/>
    </location>
</feature>
<feature type="modified residue" description="Phosphoserine" evidence="2">
    <location>
        <position position="958"/>
    </location>
</feature>
<feature type="modified residue" description="Phosphoserine" evidence="2">
    <location>
        <position position="960"/>
    </location>
</feature>
<feature type="modified residue" description="Phosphoserine" evidence="18">
    <location>
        <position position="1114"/>
    </location>
</feature>
<feature type="modified residue" description="Phosphoserine" evidence="18">
    <location>
        <position position="1451"/>
    </location>
</feature>
<feature type="modified residue" description="Phosphoserine" evidence="18">
    <location>
        <position position="1462"/>
    </location>
</feature>
<feature type="modified residue" description="Phosphoserine" evidence="18">
    <location>
        <position position="1470"/>
    </location>
</feature>
<feature type="modified residue" description="Phosphoserine" evidence="18">
    <location>
        <position position="1473"/>
    </location>
</feature>
<feature type="modified residue" description="Phosphoserine" evidence="18">
    <location>
        <position position="1795"/>
    </location>
</feature>
<feature type="modified residue" description="Phosphoserine" evidence="3">
    <location>
        <position position="1813"/>
    </location>
</feature>
<feature type="modified residue" description="Phosphoserine" evidence="3">
    <location>
        <position position="1883"/>
    </location>
</feature>
<feature type="splice variant" id="VSP_044355" description="In isoform 4, isoform 5 and isoform 6." evidence="14 15">
    <location>
        <begin position="1"/>
        <end position="867"/>
    </location>
</feature>
<feature type="splice variant" id="VSP_044356" description="In isoform 2 and isoform 3." evidence="13 16">
    <original>VRKASAPEKLSDGEYISDGEEGDKCTWFKIPKVQEVLVKS</original>
    <variation>G</variation>
    <location>
        <begin position="834"/>
        <end position="873"/>
    </location>
</feature>
<feature type="splice variant" id="VSP_044357" description="In isoform 4, isoform 5 and isoform 6." evidence="14 15">
    <original>EVLVK</original>
    <variation>MALPH</variation>
    <location>
        <begin position="868"/>
        <end position="872"/>
    </location>
</feature>
<feature type="splice variant" id="VSP_044358" description="In isoform 2 and isoform 6." evidence="13 15 16">
    <location>
        <begin position="1588"/>
        <end position="1783"/>
    </location>
</feature>
<feature type="splice variant" id="VSP_044359" description="In isoform 5." evidence="14">
    <location>
        <position position="1941"/>
    </location>
</feature>
<feature type="sequence conflict" description="In Ref. 5; AAH21657." evidence="17" ref="5">
    <original>L</original>
    <variation>P</variation>
    <location>
        <position position="717"/>
    </location>
</feature>
<feature type="sequence conflict" description="In Ref. 1; AAB01607/AAB01603 and 5; AAB58381." evidence="17" ref="1 5">
    <original>C</original>
    <variation>W</variation>
    <location>
        <position position="1603"/>
    </location>
</feature>
<feature type="sequence conflict" description="In Ref. 2; BAC29151." evidence="17" ref="2">
    <original>V</original>
    <variation>I</variation>
    <location>
        <position position="1652"/>
    </location>
</feature>
<feature type="modified residue" description="Phosphoserine" evidence="18">
    <location sequence="G5E8K5-2">
        <position position="830"/>
    </location>
</feature>
<feature type="modified residue" description="Phosphoserine" evidence="18">
    <location sequence="G5E8K5-2">
        <position position="1560"/>
    </location>
</feature>
<feature type="modified residue" description="Phosphoserine" evidence="18">
    <location sequence="G5E8K5-3">
        <position position="830"/>
    </location>
</feature>
<feature type="modified residue" description="Phosphoserine" evidence="18">
    <location sequence="G5E8K5-6">
        <position position="732"/>
    </location>
</feature>
<evidence type="ECO:0000250" key="1"/>
<evidence type="ECO:0000250" key="2">
    <source>
        <dbReference type="UniProtKB" id="O70511"/>
    </source>
</evidence>
<evidence type="ECO:0000250" key="3">
    <source>
        <dbReference type="UniProtKB" id="Q12955"/>
    </source>
</evidence>
<evidence type="ECO:0000255" key="4">
    <source>
        <dbReference type="PROSITE-ProRule" id="PRU00064"/>
    </source>
</evidence>
<evidence type="ECO:0000255" key="5">
    <source>
        <dbReference type="PROSITE-ProRule" id="PRU00485"/>
    </source>
</evidence>
<evidence type="ECO:0000256" key="6">
    <source>
        <dbReference type="SAM" id="MobiDB-lite"/>
    </source>
</evidence>
<evidence type="ECO:0000269" key="7">
    <source>
    </source>
</evidence>
<evidence type="ECO:0000269" key="8">
    <source>
    </source>
</evidence>
<evidence type="ECO:0000269" key="9">
    <source>
    </source>
</evidence>
<evidence type="ECO:0000269" key="10">
    <source>
    </source>
</evidence>
<evidence type="ECO:0000269" key="11">
    <source>
    </source>
</evidence>
<evidence type="ECO:0000269" key="12">
    <source>
    </source>
</evidence>
<evidence type="ECO:0000303" key="13">
    <source>
    </source>
</evidence>
<evidence type="ECO:0000303" key="14">
    <source>
    </source>
</evidence>
<evidence type="ECO:0000303" key="15">
    <source>
    </source>
</evidence>
<evidence type="ECO:0000303" key="16">
    <source>
    </source>
</evidence>
<evidence type="ECO:0000305" key="17"/>
<evidence type="ECO:0007744" key="18">
    <source>
    </source>
</evidence>
<comment type="function">
    <text evidence="2 3 8 10">Membrane-cytoskeleton linker. May participate in the maintenance/targeting of ion channels and cell adhesion molecules at the nodes of Ranvier and axonal initial segments (By similarity). In skeletal muscle, required for costamere localization of DMD and betaDAG1 (PubMed:19109891). Regulates KCNA1 channel activity in function of dietary Mg(2+) levels, and thereby contributes to the regulation of renal Mg(2+) reabsorption (PubMed:23903368). Required for intracellular adhesion and junctional conductance in myocytes, potentially via stabilization of GJA1/CX43 protein abundance and promotion of PKP2, GJA1/CX43, and SCN5A/Nav1.5 localization to cell-cell junctions (By similarity).</text>
</comment>
<comment type="subunit">
    <text evidence="2 3 7 8">May be a constituent of a NFASC/NRCAM/ankyrin G complex. Interacts with RHBG (By similarity). Directly interacts with DMD and betaDAG1; this interaction does not interfere with DMD-binding and is required for DMD and betaDAG1 retention at costameres. Interacts (via N-terminal ANK repeats) with SCHIP1 isoform 7 (via C-terminus); this interaction is required for the localization at axon initial segments (AISs) and nodes of Ranvier (NRs). Interacts with PLEC and FLNC (By similarity). Interacts with KCNA1; this inhibits channel activity (PubMed:23903368). Interacts with SCN5A (By similarity). Interacts with PKP2 and GJA1/CX43 (By similarity).</text>
</comment>
<comment type="subcellular location">
    <subcellularLocation>
        <location evidence="3">Cytoplasm</location>
        <location evidence="3">Cytoskeleton</location>
    </subcellularLocation>
    <subcellularLocation>
        <location evidence="2">Cell projection</location>
        <location evidence="2">Axon</location>
    </subcellularLocation>
    <subcellularLocation>
        <location evidence="3">Cell membrane</location>
        <location evidence="3">Sarcolemma</location>
    </subcellularLocation>
    <subcellularLocation>
        <location evidence="2">Postsynaptic cell membrane</location>
    </subcellularLocation>
    <subcellularLocation>
        <location evidence="12">Lysosome</location>
    </subcellularLocation>
    <subcellularLocation>
        <location evidence="2">Cell membrane</location>
        <location evidence="2">Sarcolemma</location>
        <location evidence="2">T-tubule</location>
    </subcellularLocation>
    <text>In skeletal muscle, localized at costameres and neuromuscular junctions. In bone marrow-derived macrophages, isoforms 2 and 3 are associated with lysosomes.</text>
</comment>
<comment type="alternative products">
    <event type="alternative splicing"/>
    <isoform>
        <id>G5E8K5-1</id>
        <name>1</name>
        <sequence type="displayed"/>
    </isoform>
    <isoform>
        <id>G5E8K5-2</id>
        <name>2</name>
        <sequence type="described" ref="VSP_044356 VSP_044358"/>
    </isoform>
    <isoform>
        <id>G5E8K5-3</id>
        <name>3</name>
        <sequence type="described" ref="VSP_044356"/>
    </isoform>
    <isoform>
        <id>G5E8K5-4</id>
        <name>4</name>
        <sequence type="described" ref="VSP_044355 VSP_044357"/>
    </isoform>
    <isoform>
        <id>G5E8K5-5</id>
        <name>5</name>
        <sequence type="described" ref="VSP_044355 VSP_044357 VSP_044359"/>
    </isoform>
    <isoform>
        <id>G5E8K5-6</id>
        <name>6</name>
        <sequence type="described" ref="VSP_044355 VSP_044357 VSP_044358"/>
    </isoform>
</comment>
<comment type="tissue specificity">
    <text evidence="10 11 12">Expressed in many epithelial tissues, muscles and axons. Expressed in kidney, brain, skin, lung, liver, intestine, pancreas, heart and testis (at protein level). In testis, expressed in Leydig cells, but very weakly or not at all in Sertoli cells or seminiferous tubules. Expressed in macrophages (at protein level).</text>
</comment>
<comment type="developmental stage">
    <text evidence="9">In an in vitro model of myogenesis, not detected in proliferating myoblasts. Hardly detectable during the first days of differentiation. Expression greatly increases in mature myotubes.</text>
</comment>
<comment type="induction">
    <text evidence="10">Up-regulated by high dietary Mg(2+) levels.</text>
</comment>
<comment type="sequence caution" evidence="17">
    <conflict type="erroneous initiation">
        <sequence resource="EMBL-CDS" id="AAB58380"/>
    </conflict>
    <text>Truncated N-terminus.</text>
</comment>
<comment type="sequence caution" evidence="17">
    <conflict type="erroneous initiation">
        <sequence resource="EMBL-CDS" id="AAB58381"/>
    </conflict>
    <text>Truncated N-terminus.</text>
</comment>